<protein>
    <recommendedName>
        <fullName>Sperm protamine P1</fullName>
    </recommendedName>
    <alternativeName>
        <fullName>Cysteine-rich protamine</fullName>
    </alternativeName>
</protein>
<sequence length="50" mass="6603">MARYRCCRSQSRSRCYRQRRSRRRKRQSCQTQRRAMRCCRRRSRLRRRRH</sequence>
<dbReference type="EMBL" id="L14590">
    <property type="protein sequence ID" value="AAA51440.1"/>
    <property type="molecule type" value="Genomic_DNA"/>
</dbReference>
<dbReference type="EMBL" id="AF215722">
    <property type="protein sequence ID" value="AAF34628.1"/>
    <property type="molecule type" value="Genomic_DNA"/>
</dbReference>
<dbReference type="EMBL" id="AF215721">
    <property type="protein sequence ID" value="AAF34628.1"/>
    <property type="status" value="JOINED"/>
    <property type="molecule type" value="Genomic_DNA"/>
</dbReference>
<dbReference type="RefSeq" id="XP_008958609.1">
    <property type="nucleotide sequence ID" value="XM_008960361.1"/>
</dbReference>
<dbReference type="RefSeq" id="XP_057156014.1">
    <property type="nucleotide sequence ID" value="XM_057300031.2"/>
</dbReference>
<dbReference type="Ensembl" id="ENSPPAT00000033517.1">
    <property type="protein sequence ID" value="ENSPPAP00000010863.1"/>
    <property type="gene ID" value="ENSPPAG00000028645.1"/>
</dbReference>
<dbReference type="GeneID" id="130540895"/>
<dbReference type="OMA" id="MARYICC"/>
<dbReference type="Proteomes" id="UP000240080">
    <property type="component" value="Chromosome 16"/>
</dbReference>
<dbReference type="Bgee" id="ENSPPAG00000028645">
    <property type="expression patterns" value="Expressed in testis and 2 other cell types or tissues"/>
</dbReference>
<dbReference type="GO" id="GO:0000786">
    <property type="term" value="C:nucleosome"/>
    <property type="evidence" value="ECO:0007669"/>
    <property type="project" value="UniProtKB-KW"/>
</dbReference>
<dbReference type="GO" id="GO:0005634">
    <property type="term" value="C:nucleus"/>
    <property type="evidence" value="ECO:0007669"/>
    <property type="project" value="UniProtKB-SubCell"/>
</dbReference>
<dbReference type="GO" id="GO:0003677">
    <property type="term" value="F:DNA binding"/>
    <property type="evidence" value="ECO:0007669"/>
    <property type="project" value="UniProtKB-KW"/>
</dbReference>
<dbReference type="GO" id="GO:0030261">
    <property type="term" value="P:chromosome condensation"/>
    <property type="evidence" value="ECO:0007669"/>
    <property type="project" value="UniProtKB-KW"/>
</dbReference>
<dbReference type="GO" id="GO:0035092">
    <property type="term" value="P:sperm DNA condensation"/>
    <property type="evidence" value="ECO:0007669"/>
    <property type="project" value="InterPro"/>
</dbReference>
<dbReference type="InterPro" id="IPR000221">
    <property type="entry name" value="Protamine_P1"/>
</dbReference>
<dbReference type="Pfam" id="PF00260">
    <property type="entry name" value="Protamine_P1"/>
    <property type="match status" value="1"/>
</dbReference>
<dbReference type="PROSITE" id="PS00048">
    <property type="entry name" value="PROTAMINE_P1"/>
    <property type="match status" value="1"/>
</dbReference>
<gene>
    <name type="primary">PRM1</name>
</gene>
<evidence type="ECO:0000250" key="1"/>
<evidence type="ECO:0000305" key="2"/>
<proteinExistence type="evidence at transcript level"/>
<reference key="1">
    <citation type="journal article" date="1993" name="J. Mol. Evol.">
        <title>Evolution of protamine P1 genes in primates.</title>
        <authorList>
            <person name="Retief J.D."/>
            <person name="Winkfein R.J."/>
            <person name="Dixon G.H."/>
            <person name="Adroer R."/>
            <person name="Queralt R."/>
            <person name="Ballabriga J."/>
            <person name="Oliva R."/>
        </authorList>
    </citation>
    <scope>NUCLEOTIDE SEQUENCE [GENOMIC DNA]</scope>
</reference>
<reference key="2">
    <citation type="journal article" date="2000" name="Nature">
        <title>Rapid evolution of male reproductive genes in the descent of man.</title>
        <authorList>
            <person name="Wyckoff G.J."/>
            <person name="Wang W."/>
            <person name="Wu C.-I."/>
        </authorList>
    </citation>
    <scope>NUCLEOTIDE SEQUENCE [GENOMIC DNA]</scope>
</reference>
<feature type="chain" id="PRO_0000191519" description="Sperm protamine P1">
    <location>
        <begin position="1"/>
        <end position="50"/>
    </location>
</feature>
<accession>P35308</accession>
<comment type="function">
    <text>Protamines substitute for histones in the chromatin of sperm during the haploid phase of spermatogenesis. They compact sperm DNA into a highly condensed, stable and inactive complex.</text>
</comment>
<comment type="subunit">
    <text evidence="1">Cross-linked by interchain disulfide bonds around the DNA-helix.</text>
</comment>
<comment type="subcellular location">
    <subcellularLocation>
        <location>Nucleus</location>
    </subcellularLocation>
    <subcellularLocation>
        <location>Chromosome</location>
    </subcellularLocation>
</comment>
<comment type="tissue specificity">
    <text>Testis.</text>
</comment>
<comment type="similarity">
    <text evidence="2">Belongs to the protamine P1 family.</text>
</comment>
<name>HSP1_PANPA</name>
<keyword id="KW-0158">Chromosome</keyword>
<keyword id="KW-0217">Developmental protein</keyword>
<keyword id="KW-0221">Differentiation</keyword>
<keyword id="KW-1015">Disulfide bond</keyword>
<keyword id="KW-0226">DNA condensation</keyword>
<keyword id="KW-0238">DNA-binding</keyword>
<keyword id="KW-0544">Nucleosome core</keyword>
<keyword id="KW-0539">Nucleus</keyword>
<keyword id="KW-1185">Reference proteome</keyword>
<keyword id="KW-0744">Spermatogenesis</keyword>
<organism>
    <name type="scientific">Pan paniscus</name>
    <name type="common">Pygmy chimpanzee</name>
    <name type="synonym">Bonobo</name>
    <dbReference type="NCBI Taxonomy" id="9597"/>
    <lineage>
        <taxon>Eukaryota</taxon>
        <taxon>Metazoa</taxon>
        <taxon>Chordata</taxon>
        <taxon>Craniata</taxon>
        <taxon>Vertebrata</taxon>
        <taxon>Euteleostomi</taxon>
        <taxon>Mammalia</taxon>
        <taxon>Eutheria</taxon>
        <taxon>Euarchontoglires</taxon>
        <taxon>Primates</taxon>
        <taxon>Haplorrhini</taxon>
        <taxon>Catarrhini</taxon>
        <taxon>Hominidae</taxon>
        <taxon>Pan</taxon>
    </lineage>
</organism>